<name>LDH_CLOPE</name>
<keyword id="KW-0021">Allosteric enzyme</keyword>
<keyword id="KW-0963">Cytoplasm</keyword>
<keyword id="KW-0520">NAD</keyword>
<keyword id="KW-0560">Oxidoreductase</keyword>
<keyword id="KW-0597">Phosphoprotein</keyword>
<keyword id="KW-1185">Reference proteome</keyword>
<proteinExistence type="inferred from homology"/>
<evidence type="ECO:0000255" key="1">
    <source>
        <dbReference type="HAMAP-Rule" id="MF_00488"/>
    </source>
</evidence>
<sequence>MIREKTNKISIIGAGFVGSTTAFALMQDGLASEIVIVDINKDKAHAEAMDLAQGAAFVKSVDIKSGDYADTKDSDIVIITAGVGPKPGETRLDIINKNLKIFQSIVPEVVKYSPNSILLVVSNPVDILTYITYKLSGFPKERVIGSGTVLDTSRLKYMLSEHFDIDARNVHTYIIGEHGDSEITAWSLTNIAGANVEEYCKTVCANCDGSFKKELPEKVKNAAYEIINSKGYTNYAVALAVTRIVEAILRDENAILTVSSLFEGQYGIDNVYLAMPTIVDRSGARQILDVPISNEEKENLIKSAEILKGHIANSELD</sequence>
<comment type="function">
    <text evidence="1">Catalyzes the conversion of lactate to pyruvate.</text>
</comment>
<comment type="catalytic activity">
    <reaction evidence="1">
        <text>(S)-lactate + NAD(+) = pyruvate + NADH + H(+)</text>
        <dbReference type="Rhea" id="RHEA:23444"/>
        <dbReference type="ChEBI" id="CHEBI:15361"/>
        <dbReference type="ChEBI" id="CHEBI:15378"/>
        <dbReference type="ChEBI" id="CHEBI:16651"/>
        <dbReference type="ChEBI" id="CHEBI:57540"/>
        <dbReference type="ChEBI" id="CHEBI:57945"/>
        <dbReference type="EC" id="1.1.1.27"/>
    </reaction>
</comment>
<comment type="activity regulation">
    <text evidence="1">Allosterically activated by fructose 1,6-bisphosphate (FBP).</text>
</comment>
<comment type="pathway">
    <text evidence="1">Fermentation; pyruvate fermentation to lactate; (S)-lactate from pyruvate: step 1/1.</text>
</comment>
<comment type="subunit">
    <text evidence="1">Homotetramer.</text>
</comment>
<comment type="subcellular location">
    <subcellularLocation>
        <location evidence="1">Cytoplasm</location>
    </subcellularLocation>
</comment>
<comment type="similarity">
    <text evidence="1">Belongs to the LDH/MDH superfamily. LDH family.</text>
</comment>
<reference key="1">
    <citation type="journal article" date="2002" name="Proc. Natl. Acad. Sci. U.S.A.">
        <title>Complete genome sequence of Clostridium perfringens, an anaerobic flesh-eater.</title>
        <authorList>
            <person name="Shimizu T."/>
            <person name="Ohtani K."/>
            <person name="Hirakawa H."/>
            <person name="Ohshima K."/>
            <person name="Yamashita A."/>
            <person name="Shiba T."/>
            <person name="Ogasawara N."/>
            <person name="Hattori M."/>
            <person name="Kuhara S."/>
            <person name="Hayashi H."/>
        </authorList>
    </citation>
    <scope>NUCLEOTIDE SEQUENCE [LARGE SCALE GENOMIC DNA]</scope>
    <source>
        <strain>13 / Type A</strain>
    </source>
</reference>
<dbReference type="EC" id="1.1.1.27" evidence="1"/>
<dbReference type="EMBL" id="BA000016">
    <property type="protein sequence ID" value="BAB79809.1"/>
    <property type="molecule type" value="Genomic_DNA"/>
</dbReference>
<dbReference type="RefSeq" id="WP_003448546.1">
    <property type="nucleotide sequence ID" value="NC_003366.1"/>
</dbReference>
<dbReference type="SMR" id="Q8XP62"/>
<dbReference type="STRING" id="195102.gene:10489347"/>
<dbReference type="KEGG" id="cpe:CPE0103"/>
<dbReference type="HOGENOM" id="CLU_045401_1_1_9"/>
<dbReference type="UniPathway" id="UPA00554">
    <property type="reaction ID" value="UER00611"/>
</dbReference>
<dbReference type="Proteomes" id="UP000000818">
    <property type="component" value="Chromosome"/>
</dbReference>
<dbReference type="GO" id="GO:0005737">
    <property type="term" value="C:cytoplasm"/>
    <property type="evidence" value="ECO:0007669"/>
    <property type="project" value="UniProtKB-SubCell"/>
</dbReference>
<dbReference type="GO" id="GO:0004459">
    <property type="term" value="F:L-lactate dehydrogenase activity"/>
    <property type="evidence" value="ECO:0007669"/>
    <property type="project" value="UniProtKB-UniRule"/>
</dbReference>
<dbReference type="GO" id="GO:0006096">
    <property type="term" value="P:glycolytic process"/>
    <property type="evidence" value="ECO:0007669"/>
    <property type="project" value="UniProtKB-UniRule"/>
</dbReference>
<dbReference type="GO" id="GO:0006089">
    <property type="term" value="P:lactate metabolic process"/>
    <property type="evidence" value="ECO:0007669"/>
    <property type="project" value="TreeGrafter"/>
</dbReference>
<dbReference type="CDD" id="cd05292">
    <property type="entry name" value="LDH_2"/>
    <property type="match status" value="1"/>
</dbReference>
<dbReference type="FunFam" id="3.40.50.720:FF:000018">
    <property type="entry name" value="Malate dehydrogenase"/>
    <property type="match status" value="1"/>
</dbReference>
<dbReference type="Gene3D" id="3.90.110.10">
    <property type="entry name" value="Lactate dehydrogenase/glycoside hydrolase, family 4, C-terminal"/>
    <property type="match status" value="1"/>
</dbReference>
<dbReference type="Gene3D" id="3.40.50.720">
    <property type="entry name" value="NAD(P)-binding Rossmann-like Domain"/>
    <property type="match status" value="1"/>
</dbReference>
<dbReference type="HAMAP" id="MF_00488">
    <property type="entry name" value="Lactate_dehydrog"/>
    <property type="match status" value="1"/>
</dbReference>
<dbReference type="InterPro" id="IPR001557">
    <property type="entry name" value="L-lactate/malate_DH"/>
</dbReference>
<dbReference type="InterPro" id="IPR011304">
    <property type="entry name" value="L-lactate_DH"/>
</dbReference>
<dbReference type="InterPro" id="IPR018177">
    <property type="entry name" value="L-lactate_DH_AS"/>
</dbReference>
<dbReference type="InterPro" id="IPR022383">
    <property type="entry name" value="Lactate/malate_DH_C"/>
</dbReference>
<dbReference type="InterPro" id="IPR001236">
    <property type="entry name" value="Lactate/malate_DH_N"/>
</dbReference>
<dbReference type="InterPro" id="IPR015955">
    <property type="entry name" value="Lactate_DH/Glyco_Ohase_4_C"/>
</dbReference>
<dbReference type="InterPro" id="IPR036291">
    <property type="entry name" value="NAD(P)-bd_dom_sf"/>
</dbReference>
<dbReference type="NCBIfam" id="TIGR01771">
    <property type="entry name" value="L-LDH-NAD"/>
    <property type="match status" value="1"/>
</dbReference>
<dbReference type="NCBIfam" id="NF000824">
    <property type="entry name" value="PRK00066.1"/>
    <property type="match status" value="1"/>
</dbReference>
<dbReference type="NCBIfam" id="NF004863">
    <property type="entry name" value="PRK06223.1"/>
    <property type="match status" value="1"/>
</dbReference>
<dbReference type="PANTHER" id="PTHR43128">
    <property type="entry name" value="L-2-HYDROXYCARBOXYLATE DEHYDROGENASE (NAD(P)(+))"/>
    <property type="match status" value="1"/>
</dbReference>
<dbReference type="PANTHER" id="PTHR43128:SF16">
    <property type="entry name" value="L-LACTATE DEHYDROGENASE"/>
    <property type="match status" value="1"/>
</dbReference>
<dbReference type="Pfam" id="PF02866">
    <property type="entry name" value="Ldh_1_C"/>
    <property type="match status" value="1"/>
</dbReference>
<dbReference type="Pfam" id="PF00056">
    <property type="entry name" value="Ldh_1_N"/>
    <property type="match status" value="1"/>
</dbReference>
<dbReference type="PIRSF" id="PIRSF000102">
    <property type="entry name" value="Lac_mal_DH"/>
    <property type="match status" value="1"/>
</dbReference>
<dbReference type="PRINTS" id="PR00086">
    <property type="entry name" value="LLDHDRGNASE"/>
</dbReference>
<dbReference type="SUPFAM" id="SSF56327">
    <property type="entry name" value="LDH C-terminal domain-like"/>
    <property type="match status" value="1"/>
</dbReference>
<dbReference type="SUPFAM" id="SSF51735">
    <property type="entry name" value="NAD(P)-binding Rossmann-fold domains"/>
    <property type="match status" value="1"/>
</dbReference>
<dbReference type="PROSITE" id="PS00064">
    <property type="entry name" value="L_LDH"/>
    <property type="match status" value="1"/>
</dbReference>
<organism>
    <name type="scientific">Clostridium perfringens (strain 13 / Type A)</name>
    <dbReference type="NCBI Taxonomy" id="195102"/>
    <lineage>
        <taxon>Bacteria</taxon>
        <taxon>Bacillati</taxon>
        <taxon>Bacillota</taxon>
        <taxon>Clostridia</taxon>
        <taxon>Eubacteriales</taxon>
        <taxon>Clostridiaceae</taxon>
        <taxon>Clostridium</taxon>
    </lineage>
</organism>
<protein>
    <recommendedName>
        <fullName evidence="1">L-lactate dehydrogenase</fullName>
        <shortName evidence="1">L-LDH</shortName>
        <ecNumber evidence="1">1.1.1.27</ecNumber>
    </recommendedName>
</protein>
<gene>
    <name evidence="1" type="primary">ldh</name>
    <name type="ordered locus">CPE0103</name>
</gene>
<feature type="chain" id="PRO_0000168335" description="L-lactate dehydrogenase">
    <location>
        <begin position="1"/>
        <end position="317"/>
    </location>
</feature>
<feature type="active site" description="Proton acceptor" evidence="1">
    <location>
        <position position="178"/>
    </location>
</feature>
<feature type="binding site" evidence="1">
    <location>
        <position position="17"/>
    </location>
    <ligand>
        <name>NAD(+)</name>
        <dbReference type="ChEBI" id="CHEBI:57540"/>
    </ligand>
</feature>
<feature type="binding site" evidence="1">
    <location>
        <position position="38"/>
    </location>
    <ligand>
        <name>NAD(+)</name>
        <dbReference type="ChEBI" id="CHEBI:57540"/>
    </ligand>
</feature>
<feature type="binding site" evidence="1">
    <location>
        <position position="43"/>
    </location>
    <ligand>
        <name>NAD(+)</name>
        <dbReference type="ChEBI" id="CHEBI:57540"/>
    </ligand>
</feature>
<feature type="binding site" evidence="1">
    <location>
        <position position="68"/>
    </location>
    <ligand>
        <name>NAD(+)</name>
        <dbReference type="ChEBI" id="CHEBI:57540"/>
    </ligand>
</feature>
<feature type="binding site" evidence="1">
    <location>
        <begin position="82"/>
        <end position="83"/>
    </location>
    <ligand>
        <name>NAD(+)</name>
        <dbReference type="ChEBI" id="CHEBI:57540"/>
    </ligand>
</feature>
<feature type="binding site" evidence="1">
    <location>
        <position position="91"/>
    </location>
    <ligand>
        <name>substrate</name>
    </ligand>
</feature>
<feature type="binding site" evidence="1">
    <location>
        <position position="104"/>
    </location>
    <ligand>
        <name>NAD(+)</name>
        <dbReference type="ChEBI" id="CHEBI:57540"/>
    </ligand>
</feature>
<feature type="binding site" evidence="1">
    <location>
        <begin position="121"/>
        <end position="123"/>
    </location>
    <ligand>
        <name>NAD(+)</name>
        <dbReference type="ChEBI" id="CHEBI:57540"/>
    </ligand>
</feature>
<feature type="binding site" evidence="1">
    <location>
        <begin position="123"/>
        <end position="126"/>
    </location>
    <ligand>
        <name>substrate</name>
    </ligand>
</feature>
<feature type="binding site" evidence="1">
    <location>
        <position position="146"/>
    </location>
    <ligand>
        <name>NAD(+)</name>
        <dbReference type="ChEBI" id="CHEBI:57540"/>
    </ligand>
</feature>
<feature type="binding site" evidence="1">
    <location>
        <begin position="151"/>
        <end position="154"/>
    </location>
    <ligand>
        <name>substrate</name>
    </ligand>
</feature>
<feature type="binding site" evidence="1">
    <location>
        <position position="156"/>
    </location>
    <ligand>
        <name>beta-D-fructose 1,6-bisphosphate</name>
        <dbReference type="ChEBI" id="CHEBI:32966"/>
        <note>allosteric activator</note>
    </ligand>
</feature>
<feature type="binding site" evidence="1">
    <location>
        <position position="171"/>
    </location>
    <ligand>
        <name>beta-D-fructose 1,6-bisphosphate</name>
        <dbReference type="ChEBI" id="CHEBI:32966"/>
        <note>allosteric activator</note>
    </ligand>
</feature>
<feature type="binding site" evidence="1">
    <location>
        <position position="233"/>
    </location>
    <ligand>
        <name>substrate</name>
    </ligand>
</feature>
<feature type="modified residue" description="Phosphotyrosine" evidence="1">
    <location>
        <position position="224"/>
    </location>
</feature>
<accession>Q8XP62</accession>